<comment type="function">
    <text evidence="1">Plays an important role in signaling via the cell surface receptor PLXND1. Mediates reorganization of the actin cytoskeleton, leading to the retraction of cell projections. Promotes focal adhesion disassembly and inhibits adhesion of endothelial cells to the extracellular matrix. Regulates angiogenesis, both during embryogenesis and after birth. Can down-regulate sprouting angiogenesis. Required for normal vascular patterning during embryogenesis. Plays an important role in ensuring the specificity of synapse formation (By similarity).</text>
</comment>
<comment type="subunit">
    <text evidence="1">Interacts with PLXND1.</text>
</comment>
<comment type="interaction">
    <interactant intactId="EBI-7283693">
        <id>O15041</id>
    </interactant>
    <interactant intactId="EBI-310731">
        <id>Q9Y4D7</id>
        <label>PLXND1</label>
    </interactant>
    <organismsDiffer>false</organismsDiffer>
    <experiments>2</experiments>
</comment>
<comment type="subcellular location">
    <subcellularLocation>
        <location evidence="1">Secreted</location>
    </subcellularLocation>
</comment>
<comment type="alternative products">
    <event type="alternative splicing"/>
    <isoform>
        <id>O15041-1</id>
        <name>1</name>
        <sequence type="displayed"/>
    </isoform>
    <isoform>
        <id>O15041-2</id>
        <name>2</name>
        <sequence type="described" ref="VSP_046237"/>
    </isoform>
</comment>
<comment type="similarity">
    <text evidence="7">Belongs to the semaphorin family.</text>
</comment>
<comment type="sequence caution" evidence="7">
    <conflict type="erroneous initiation">
        <sequence resource="EMBL-CDS" id="BAA20789"/>
    </conflict>
</comment>
<name>SEM3E_HUMAN</name>
<sequence>MASAGHIITLLLWGYLLELWTGGHTADTTHPRLRLSHKELLNLNRTSIFHSPFGFLDLHTMLLDEYQERLFVGGRDLVYSLSLERISDGYKEIHWPSTALKMEECIMKGKDAGECANYVRVLHHYNRTHLLTCGTGAFDPVCAFIRVGYHLEDPLFHLESPRSERGRGRCPFDPSSSFISTLIGSELFAGLYSDYWSRDAAIFRSMGRLAHIRTEHDDERLLKEPKFVGSYMIPDNEDRDDNKVYFFFTEKALEAENNAHAIYTRVGRLCVNDVGGQRILVNKWSTFLKARLVCSVPGMNGIDTYFDELEDVFLLPTRDHKNPVIFGLFNTTSNIFRGHAICVYHMSSIRAAFNGPYAHKEGPEYHWSVYEGKVPYPRPGSCASKVNGGRYGTTKDYPDDAIRFARSHPLMYQAIKPAHKKPILVKTDGKYNLKQIAVDRVEAEDGQYDVLFIGTDNGIVLKVITIYNQEMESMEEVILEELQIFKDPVPIISMEISSKRQQLYIGSASAVAQVRFHHCDMYGSACADCCLARDPYCAWDGISCSRYYPTGTHAKRRFRRQDVRHGNAAQQCFGQQFVGDALDKTEEHLAYGIENNSTLLECTPRSLQAKVIWFVQKGRETRKEEVKTDDRVVKMDLGLLFLRLHKSDAGTYFCQTVEHSFVHTVRKITLEVVEEEKVEDMFNKDDEEDRHHRMPCPAQSSISQGAKPWYKEFLQLIGYSNFQRVEEYCEKVWCTDRKRKKLKMSPSKWKYANPQEKKLRSKPEHYRLPRHTLDS</sequence>
<protein>
    <recommendedName>
        <fullName>Semaphorin-3E</fullName>
    </recommendedName>
</protein>
<feature type="signal peptide" evidence="2">
    <location>
        <begin position="1"/>
        <end position="25"/>
    </location>
</feature>
<feature type="chain" id="PRO_0000032317" description="Semaphorin-3E">
    <location>
        <begin position="26"/>
        <end position="775"/>
    </location>
</feature>
<feature type="domain" description="Sema" evidence="3">
    <location>
        <begin position="32"/>
        <end position="516"/>
    </location>
</feature>
<feature type="domain" description="Ig-like C2-type">
    <location>
        <begin position="581"/>
        <end position="669"/>
    </location>
</feature>
<feature type="region of interest" description="Disordered" evidence="4">
    <location>
        <begin position="742"/>
        <end position="775"/>
    </location>
</feature>
<feature type="compositionally biased region" description="Basic and acidic residues" evidence="4">
    <location>
        <begin position="755"/>
        <end position="775"/>
    </location>
</feature>
<feature type="glycosylation site" description="N-linked (GlcNAc...) asparagine" evidence="2">
    <location>
        <position position="44"/>
    </location>
</feature>
<feature type="glycosylation site" description="N-linked (GlcNAc...) asparagine" evidence="2">
    <location>
        <position position="126"/>
    </location>
</feature>
<feature type="glycosylation site" description="N-linked (GlcNAc...) asparagine" evidence="2">
    <location>
        <position position="330"/>
    </location>
</feature>
<feature type="glycosylation site" description="N-linked (GlcNAc...) asparagine" evidence="2">
    <location>
        <position position="595"/>
    </location>
</feature>
<feature type="glycosylation site" description="N-linked (GlcNAc...) asparagine" evidence="2">
    <location>
        <position position="596"/>
    </location>
</feature>
<feature type="disulfide bond" evidence="1">
    <location>
        <begin position="105"/>
        <end position="115"/>
    </location>
</feature>
<feature type="disulfide bond" evidence="1">
    <location>
        <begin position="133"/>
        <end position="142"/>
    </location>
</feature>
<feature type="disulfide bond" evidence="1">
    <location>
        <begin position="270"/>
        <end position="382"/>
    </location>
</feature>
<feature type="disulfide bond" evidence="1">
    <location>
        <begin position="294"/>
        <end position="342"/>
    </location>
</feature>
<feature type="disulfide bond" evidence="1">
    <location>
        <begin position="519"/>
        <end position="537"/>
    </location>
</feature>
<feature type="disulfide bond" evidence="1">
    <location>
        <begin position="654"/>
        <end position="729"/>
    </location>
</feature>
<feature type="splice variant" id="VSP_046237" description="In isoform 2." evidence="6">
    <location>
        <begin position="1"/>
        <end position="60"/>
    </location>
</feature>
<feature type="sequence variant" id="VAR_080476" description="In dbSNP:rs61729612." evidence="5">
    <original>R</original>
    <variation>P</variation>
    <location>
        <position position="208"/>
    </location>
</feature>
<feature type="sequence variant" id="VAR_080477" description="In dbSNP:rs143631464." evidence="5">
    <original>R</original>
    <variation>C</variation>
    <location>
        <position position="619"/>
    </location>
</feature>
<feature type="sequence variant" id="VAR_080478" description="Found in a patient with CHARGE syndrome; uncertain significance; dbSNP:rs121918341." evidence="5">
    <original>S</original>
    <variation>L</variation>
    <location>
        <position position="703"/>
    </location>
</feature>
<feature type="sequence variant" id="VAR_080479" description="In dbSNP:rs61729610." evidence="5">
    <original>I</original>
    <variation>V</variation>
    <location>
        <position position="717"/>
    </location>
</feature>
<organism>
    <name type="scientific">Homo sapiens</name>
    <name type="common">Human</name>
    <dbReference type="NCBI Taxonomy" id="9606"/>
    <lineage>
        <taxon>Eukaryota</taxon>
        <taxon>Metazoa</taxon>
        <taxon>Chordata</taxon>
        <taxon>Craniata</taxon>
        <taxon>Vertebrata</taxon>
        <taxon>Euteleostomi</taxon>
        <taxon>Mammalia</taxon>
        <taxon>Eutheria</taxon>
        <taxon>Euarchontoglires</taxon>
        <taxon>Primates</taxon>
        <taxon>Haplorrhini</taxon>
        <taxon>Catarrhini</taxon>
        <taxon>Hominidae</taxon>
        <taxon>Homo</taxon>
    </lineage>
</organism>
<dbReference type="EMBL" id="AB002329">
    <property type="protein sequence ID" value="BAA20789.2"/>
    <property type="status" value="ALT_INIT"/>
    <property type="molecule type" value="mRNA"/>
</dbReference>
<dbReference type="EMBL" id="AK303925">
    <property type="protein sequence ID" value="BAG64853.1"/>
    <property type="molecule type" value="mRNA"/>
</dbReference>
<dbReference type="EMBL" id="AC004954">
    <property type="protein sequence ID" value="AAC69513.1"/>
    <property type="molecule type" value="Genomic_DNA"/>
</dbReference>
<dbReference type="EMBL" id="AC006204">
    <property type="status" value="NOT_ANNOTATED_CDS"/>
    <property type="molecule type" value="Genomic_DNA"/>
</dbReference>
<dbReference type="EMBL" id="AC079799">
    <property type="protein sequence ID" value="AAS07488.1"/>
    <property type="molecule type" value="Genomic_DNA"/>
</dbReference>
<dbReference type="EMBL" id="AC079987">
    <property type="protein sequence ID" value="AAS07487.1"/>
    <property type="molecule type" value="Genomic_DNA"/>
</dbReference>
<dbReference type="CCDS" id="CCDS34674.1">
    <molecule id="O15041-1"/>
</dbReference>
<dbReference type="RefSeq" id="NP_001171600.1">
    <molecule id="O15041-2"/>
    <property type="nucleotide sequence ID" value="NM_001178129.2"/>
</dbReference>
<dbReference type="RefSeq" id="NP_036563.1">
    <molecule id="O15041-1"/>
    <property type="nucleotide sequence ID" value="NM_012431.3"/>
</dbReference>
<dbReference type="SMR" id="O15041"/>
<dbReference type="BioGRID" id="115072">
    <property type="interactions" value="5"/>
</dbReference>
<dbReference type="FunCoup" id="O15041">
    <property type="interactions" value="362"/>
</dbReference>
<dbReference type="IntAct" id="O15041">
    <property type="interactions" value="3"/>
</dbReference>
<dbReference type="MINT" id="O15041"/>
<dbReference type="STRING" id="9606.ENSP00000496491"/>
<dbReference type="GlyCosmos" id="O15041">
    <property type="glycosylation" value="5 sites, No reported glycans"/>
</dbReference>
<dbReference type="GlyGen" id="O15041">
    <property type="glycosylation" value="5 sites, 2 N-linked glycans (2 sites)"/>
</dbReference>
<dbReference type="iPTMnet" id="O15041"/>
<dbReference type="PhosphoSitePlus" id="O15041"/>
<dbReference type="BioMuta" id="SEMA3E"/>
<dbReference type="jPOST" id="O15041"/>
<dbReference type="MassIVE" id="O15041"/>
<dbReference type="PaxDb" id="9606-ENSP00000303212"/>
<dbReference type="PeptideAtlas" id="O15041"/>
<dbReference type="ProteomicsDB" id="48396">
    <molecule id="O15041-1"/>
</dbReference>
<dbReference type="ProteomicsDB" id="5776"/>
<dbReference type="Antibodypedia" id="29599">
    <property type="antibodies" value="284 antibodies from 30 providers"/>
</dbReference>
<dbReference type="DNASU" id="9723"/>
<dbReference type="Ensembl" id="ENST00000643230.2">
    <molecule id="O15041-1"/>
    <property type="protein sequence ID" value="ENSP00000496491.1"/>
    <property type="gene ID" value="ENSG00000170381.15"/>
</dbReference>
<dbReference type="GeneID" id="9723"/>
<dbReference type="KEGG" id="hsa:9723"/>
<dbReference type="MANE-Select" id="ENST00000643230.2">
    <property type="protein sequence ID" value="ENSP00000496491.1"/>
    <property type="RefSeq nucleotide sequence ID" value="NM_012431.3"/>
    <property type="RefSeq protein sequence ID" value="NP_036563.1"/>
</dbReference>
<dbReference type="UCSC" id="uc003uhy.3">
    <molecule id="O15041-1"/>
    <property type="organism name" value="human"/>
</dbReference>
<dbReference type="AGR" id="HGNC:10727"/>
<dbReference type="CTD" id="9723"/>
<dbReference type="DisGeNET" id="9723"/>
<dbReference type="GeneCards" id="SEMA3E"/>
<dbReference type="GeneReviews" id="SEMA3E"/>
<dbReference type="HGNC" id="HGNC:10727">
    <property type="gene designation" value="SEMA3E"/>
</dbReference>
<dbReference type="HPA" id="ENSG00000170381">
    <property type="expression patterns" value="Low tissue specificity"/>
</dbReference>
<dbReference type="MalaCards" id="SEMA3E"/>
<dbReference type="MIM" id="608166">
    <property type="type" value="gene"/>
</dbReference>
<dbReference type="neXtProt" id="NX_O15041"/>
<dbReference type="OpenTargets" id="ENSG00000170381"/>
<dbReference type="Orphanet" id="138">
    <property type="disease" value="CHARGE syndrome"/>
</dbReference>
<dbReference type="PharmGKB" id="PA35649"/>
<dbReference type="VEuPathDB" id="HostDB:ENSG00000170381"/>
<dbReference type="eggNOG" id="KOG3611">
    <property type="taxonomic scope" value="Eukaryota"/>
</dbReference>
<dbReference type="GeneTree" id="ENSGT00940000158437"/>
<dbReference type="HOGENOM" id="CLU_009051_5_0_1"/>
<dbReference type="InParanoid" id="O15041"/>
<dbReference type="OMA" id="REGPEYH"/>
<dbReference type="OrthoDB" id="9988752at2759"/>
<dbReference type="PAN-GO" id="O15041">
    <property type="GO annotations" value="10 GO annotations based on evolutionary models"/>
</dbReference>
<dbReference type="PhylomeDB" id="O15041"/>
<dbReference type="TreeFam" id="TF352628"/>
<dbReference type="PathwayCommons" id="O15041"/>
<dbReference type="Reactome" id="R-HSA-416700">
    <property type="pathway name" value="Other semaphorin interactions"/>
</dbReference>
<dbReference type="SignaLink" id="O15041"/>
<dbReference type="BioGRID-ORCS" id="9723">
    <property type="hits" value="15 hits in 1135 CRISPR screens"/>
</dbReference>
<dbReference type="ChiTaRS" id="SEMA3E">
    <property type="organism name" value="human"/>
</dbReference>
<dbReference type="GenomeRNAi" id="9723"/>
<dbReference type="Pharos" id="O15041">
    <property type="development level" value="Tbio"/>
</dbReference>
<dbReference type="PRO" id="PR:O15041"/>
<dbReference type="Proteomes" id="UP000005640">
    <property type="component" value="Chromosome 7"/>
</dbReference>
<dbReference type="RNAct" id="O15041">
    <property type="molecule type" value="protein"/>
</dbReference>
<dbReference type="Bgee" id="ENSG00000170381">
    <property type="expression patterns" value="Expressed in cortical plate and 142 other cell types or tissues"/>
</dbReference>
<dbReference type="ExpressionAtlas" id="O15041">
    <property type="expression patterns" value="baseline and differential"/>
</dbReference>
<dbReference type="GO" id="GO:0005576">
    <property type="term" value="C:extracellular region"/>
    <property type="evidence" value="ECO:0000304"/>
    <property type="project" value="Reactome"/>
</dbReference>
<dbReference type="GO" id="GO:0005615">
    <property type="term" value="C:extracellular space"/>
    <property type="evidence" value="ECO:0000318"/>
    <property type="project" value="GO_Central"/>
</dbReference>
<dbReference type="GO" id="GO:0005886">
    <property type="term" value="C:plasma membrane"/>
    <property type="evidence" value="ECO:0000318"/>
    <property type="project" value="GO_Central"/>
</dbReference>
<dbReference type="GO" id="GO:0045499">
    <property type="term" value="F:chemorepellent activity"/>
    <property type="evidence" value="ECO:0000318"/>
    <property type="project" value="GO_Central"/>
</dbReference>
<dbReference type="GO" id="GO:0038191">
    <property type="term" value="F:neuropilin binding"/>
    <property type="evidence" value="ECO:0000318"/>
    <property type="project" value="GO_Central"/>
</dbReference>
<dbReference type="GO" id="GO:0048018">
    <property type="term" value="F:receptor ligand activity"/>
    <property type="evidence" value="ECO:0000314"/>
    <property type="project" value="ARUK-UCL"/>
</dbReference>
<dbReference type="GO" id="GO:0030215">
    <property type="term" value="F:semaphorin receptor binding"/>
    <property type="evidence" value="ECO:0000353"/>
    <property type="project" value="ARUK-UCL"/>
</dbReference>
<dbReference type="GO" id="GO:0007411">
    <property type="term" value="P:axon guidance"/>
    <property type="evidence" value="ECO:0000318"/>
    <property type="project" value="GO_Central"/>
</dbReference>
<dbReference type="GO" id="GO:0001569">
    <property type="term" value="P:branching involved in blood vessel morphogenesis"/>
    <property type="evidence" value="ECO:0000250"/>
    <property type="project" value="UniProtKB"/>
</dbReference>
<dbReference type="GO" id="GO:0021828">
    <property type="term" value="P:gonadotrophin-releasing hormone neuronal migration to the hypothalamus"/>
    <property type="evidence" value="ECO:0000314"/>
    <property type="project" value="ARUK-UCL"/>
</dbReference>
<dbReference type="GO" id="GO:0050919">
    <property type="term" value="P:negative chemotaxis"/>
    <property type="evidence" value="ECO:0000318"/>
    <property type="project" value="GO_Central"/>
</dbReference>
<dbReference type="GO" id="GO:0016525">
    <property type="term" value="P:negative regulation of angiogenesis"/>
    <property type="evidence" value="ECO:0000250"/>
    <property type="project" value="UniProtKB"/>
</dbReference>
<dbReference type="GO" id="GO:0001953">
    <property type="term" value="P:negative regulation of cell-matrix adhesion"/>
    <property type="evidence" value="ECO:0000250"/>
    <property type="project" value="UniProtKB"/>
</dbReference>
<dbReference type="GO" id="GO:0043524">
    <property type="term" value="P:negative regulation of neuron apoptotic process"/>
    <property type="evidence" value="ECO:0000314"/>
    <property type="project" value="ARUK-UCL"/>
</dbReference>
<dbReference type="GO" id="GO:0001755">
    <property type="term" value="P:neural crest cell migration"/>
    <property type="evidence" value="ECO:0000318"/>
    <property type="project" value="GO_Central"/>
</dbReference>
<dbReference type="GO" id="GO:0030335">
    <property type="term" value="P:positive regulation of cell migration"/>
    <property type="evidence" value="ECO:0000318"/>
    <property type="project" value="GO_Central"/>
</dbReference>
<dbReference type="GO" id="GO:0051897">
    <property type="term" value="P:positive regulation of phosphatidylinositol 3-kinase/protein kinase B signal transduction"/>
    <property type="evidence" value="ECO:0000314"/>
    <property type="project" value="ARUK-UCL"/>
</dbReference>
<dbReference type="GO" id="GO:0008360">
    <property type="term" value="P:regulation of cell shape"/>
    <property type="evidence" value="ECO:0007669"/>
    <property type="project" value="Ensembl"/>
</dbReference>
<dbReference type="GO" id="GO:0071526">
    <property type="term" value="P:semaphorin-plexin signaling pathway"/>
    <property type="evidence" value="ECO:0000316"/>
    <property type="project" value="ARUK-UCL"/>
</dbReference>
<dbReference type="GO" id="GO:0002040">
    <property type="term" value="P:sprouting angiogenesis"/>
    <property type="evidence" value="ECO:0000250"/>
    <property type="project" value="UniProtKB"/>
</dbReference>
<dbReference type="GO" id="GO:0050808">
    <property type="term" value="P:synapse organization"/>
    <property type="evidence" value="ECO:0000250"/>
    <property type="project" value="UniProtKB"/>
</dbReference>
<dbReference type="CDD" id="cd05871">
    <property type="entry name" value="Ig_Sema3"/>
    <property type="match status" value="1"/>
</dbReference>
<dbReference type="CDD" id="cd11253">
    <property type="entry name" value="Sema_3E"/>
    <property type="match status" value="1"/>
</dbReference>
<dbReference type="FunFam" id="2.130.10.10:FF:000015">
    <property type="entry name" value="Semaphorin 3B"/>
    <property type="match status" value="1"/>
</dbReference>
<dbReference type="FunFam" id="2.60.40.10:FF:000030">
    <property type="entry name" value="Semaphorin 3F like"/>
    <property type="match status" value="1"/>
</dbReference>
<dbReference type="FunFam" id="3.30.1680.10:FF:000001">
    <property type="entry name" value="Semaphorin 3F like"/>
    <property type="match status" value="1"/>
</dbReference>
<dbReference type="Gene3D" id="2.60.40.10">
    <property type="entry name" value="Immunoglobulins"/>
    <property type="match status" value="1"/>
</dbReference>
<dbReference type="Gene3D" id="3.30.1680.10">
    <property type="entry name" value="ligand-binding face of the semaphorins, domain 2"/>
    <property type="match status" value="1"/>
</dbReference>
<dbReference type="Gene3D" id="2.130.10.10">
    <property type="entry name" value="YVTN repeat-like/Quinoprotein amine dehydrogenase"/>
    <property type="match status" value="1"/>
</dbReference>
<dbReference type="InterPro" id="IPR007110">
    <property type="entry name" value="Ig-like_dom"/>
</dbReference>
<dbReference type="InterPro" id="IPR036179">
    <property type="entry name" value="Ig-like_dom_sf"/>
</dbReference>
<dbReference type="InterPro" id="IPR013783">
    <property type="entry name" value="Ig-like_fold"/>
</dbReference>
<dbReference type="InterPro" id="IPR013151">
    <property type="entry name" value="Immunoglobulin_dom"/>
</dbReference>
<dbReference type="InterPro" id="IPR016201">
    <property type="entry name" value="PSI"/>
</dbReference>
<dbReference type="InterPro" id="IPR001627">
    <property type="entry name" value="Semap_dom"/>
</dbReference>
<dbReference type="InterPro" id="IPR036352">
    <property type="entry name" value="Semap_dom_sf"/>
</dbReference>
<dbReference type="InterPro" id="IPR027231">
    <property type="entry name" value="Semaphorin"/>
</dbReference>
<dbReference type="InterPro" id="IPR015513">
    <property type="entry name" value="Semaphorin_3E_Sema"/>
</dbReference>
<dbReference type="InterPro" id="IPR015943">
    <property type="entry name" value="WD40/YVTN_repeat-like_dom_sf"/>
</dbReference>
<dbReference type="PANTHER" id="PTHR11036">
    <property type="entry name" value="SEMAPHORIN"/>
    <property type="match status" value="1"/>
</dbReference>
<dbReference type="PANTHER" id="PTHR11036:SF22">
    <property type="entry name" value="SEMAPHORIN-3E"/>
    <property type="match status" value="1"/>
</dbReference>
<dbReference type="Pfam" id="PF00047">
    <property type="entry name" value="ig"/>
    <property type="match status" value="1"/>
</dbReference>
<dbReference type="Pfam" id="PF01403">
    <property type="entry name" value="Sema"/>
    <property type="match status" value="1"/>
</dbReference>
<dbReference type="SMART" id="SM00423">
    <property type="entry name" value="PSI"/>
    <property type="match status" value="1"/>
</dbReference>
<dbReference type="SMART" id="SM00630">
    <property type="entry name" value="Sema"/>
    <property type="match status" value="1"/>
</dbReference>
<dbReference type="SUPFAM" id="SSF48726">
    <property type="entry name" value="Immunoglobulin"/>
    <property type="match status" value="1"/>
</dbReference>
<dbReference type="SUPFAM" id="SSF103575">
    <property type="entry name" value="Plexin repeat"/>
    <property type="match status" value="1"/>
</dbReference>
<dbReference type="SUPFAM" id="SSF101912">
    <property type="entry name" value="Sema domain"/>
    <property type="match status" value="1"/>
</dbReference>
<dbReference type="PROSITE" id="PS50835">
    <property type="entry name" value="IG_LIKE"/>
    <property type="match status" value="1"/>
</dbReference>
<dbReference type="PROSITE" id="PS51004">
    <property type="entry name" value="SEMA"/>
    <property type="match status" value="1"/>
</dbReference>
<accession>O15041</accession>
<accession>B4E1P1</accession>
<accession>Q75M94</accession>
<accession>Q75M97</accession>
<keyword id="KW-0025">Alternative splicing</keyword>
<keyword id="KW-0037">Angiogenesis</keyword>
<keyword id="KW-0217">Developmental protein</keyword>
<keyword id="KW-0221">Differentiation</keyword>
<keyword id="KW-1015">Disulfide bond</keyword>
<keyword id="KW-0325">Glycoprotein</keyword>
<keyword id="KW-0393">Immunoglobulin domain</keyword>
<keyword id="KW-0524">Neurogenesis</keyword>
<keyword id="KW-1267">Proteomics identification</keyword>
<keyword id="KW-1185">Reference proteome</keyword>
<keyword id="KW-0964">Secreted</keyword>
<keyword id="KW-0732">Signal</keyword>
<evidence type="ECO:0000250" key="1"/>
<evidence type="ECO:0000255" key="2"/>
<evidence type="ECO:0000255" key="3">
    <source>
        <dbReference type="PROSITE-ProRule" id="PRU00352"/>
    </source>
</evidence>
<evidence type="ECO:0000256" key="4">
    <source>
        <dbReference type="SAM" id="MobiDB-lite"/>
    </source>
</evidence>
<evidence type="ECO:0000269" key="5">
    <source>
    </source>
</evidence>
<evidence type="ECO:0000303" key="6">
    <source>
    </source>
</evidence>
<evidence type="ECO:0000305" key="7"/>
<reference key="1">
    <citation type="journal article" date="1997" name="DNA Res.">
        <title>Prediction of the coding sequences of unidentified human genes. VII. The complete sequences of 100 new cDNA clones from brain which can code for large proteins in vitro.</title>
        <authorList>
            <person name="Nagase T."/>
            <person name="Ishikawa K."/>
            <person name="Nakajima D."/>
            <person name="Ohira M."/>
            <person name="Seki N."/>
            <person name="Miyajima N."/>
            <person name="Tanaka A."/>
            <person name="Kotani H."/>
            <person name="Nomura N."/>
            <person name="Ohara O."/>
        </authorList>
    </citation>
    <scope>NUCLEOTIDE SEQUENCE [LARGE SCALE MRNA] (ISOFORM 1)</scope>
    <source>
        <tissue>Brain</tissue>
    </source>
</reference>
<reference key="2">
    <citation type="journal article" date="2004" name="Nat. Genet.">
        <title>Complete sequencing and characterization of 21,243 full-length human cDNAs.</title>
        <authorList>
            <person name="Ota T."/>
            <person name="Suzuki Y."/>
            <person name="Nishikawa T."/>
            <person name="Otsuki T."/>
            <person name="Sugiyama T."/>
            <person name="Irie R."/>
            <person name="Wakamatsu A."/>
            <person name="Hayashi K."/>
            <person name="Sato H."/>
            <person name="Nagai K."/>
            <person name="Kimura K."/>
            <person name="Makita H."/>
            <person name="Sekine M."/>
            <person name="Obayashi M."/>
            <person name="Nishi T."/>
            <person name="Shibahara T."/>
            <person name="Tanaka T."/>
            <person name="Ishii S."/>
            <person name="Yamamoto J."/>
            <person name="Saito K."/>
            <person name="Kawai Y."/>
            <person name="Isono Y."/>
            <person name="Nakamura Y."/>
            <person name="Nagahari K."/>
            <person name="Murakami K."/>
            <person name="Yasuda T."/>
            <person name="Iwayanagi T."/>
            <person name="Wagatsuma M."/>
            <person name="Shiratori A."/>
            <person name="Sudo H."/>
            <person name="Hosoiri T."/>
            <person name="Kaku Y."/>
            <person name="Kodaira H."/>
            <person name="Kondo H."/>
            <person name="Sugawara M."/>
            <person name="Takahashi M."/>
            <person name="Kanda K."/>
            <person name="Yokoi T."/>
            <person name="Furuya T."/>
            <person name="Kikkawa E."/>
            <person name="Omura Y."/>
            <person name="Abe K."/>
            <person name="Kamihara K."/>
            <person name="Katsuta N."/>
            <person name="Sato K."/>
            <person name="Tanikawa M."/>
            <person name="Yamazaki M."/>
            <person name="Ninomiya K."/>
            <person name="Ishibashi T."/>
            <person name="Yamashita H."/>
            <person name="Murakawa K."/>
            <person name="Fujimori K."/>
            <person name="Tanai H."/>
            <person name="Kimata M."/>
            <person name="Watanabe M."/>
            <person name="Hiraoka S."/>
            <person name="Chiba Y."/>
            <person name="Ishida S."/>
            <person name="Ono Y."/>
            <person name="Takiguchi S."/>
            <person name="Watanabe S."/>
            <person name="Yosida M."/>
            <person name="Hotuta T."/>
            <person name="Kusano J."/>
            <person name="Kanehori K."/>
            <person name="Takahashi-Fujii A."/>
            <person name="Hara H."/>
            <person name="Tanase T.-O."/>
            <person name="Nomura Y."/>
            <person name="Togiya S."/>
            <person name="Komai F."/>
            <person name="Hara R."/>
            <person name="Takeuchi K."/>
            <person name="Arita M."/>
            <person name="Imose N."/>
            <person name="Musashino K."/>
            <person name="Yuuki H."/>
            <person name="Oshima A."/>
            <person name="Sasaki N."/>
            <person name="Aotsuka S."/>
            <person name="Yoshikawa Y."/>
            <person name="Matsunawa H."/>
            <person name="Ichihara T."/>
            <person name="Shiohata N."/>
            <person name="Sano S."/>
            <person name="Moriya S."/>
            <person name="Momiyama H."/>
            <person name="Satoh N."/>
            <person name="Takami S."/>
            <person name="Terashima Y."/>
            <person name="Suzuki O."/>
            <person name="Nakagawa S."/>
            <person name="Senoh A."/>
            <person name="Mizoguchi H."/>
            <person name="Goto Y."/>
            <person name="Shimizu F."/>
            <person name="Wakebe H."/>
            <person name="Hishigaki H."/>
            <person name="Watanabe T."/>
            <person name="Sugiyama A."/>
            <person name="Takemoto M."/>
            <person name="Kawakami B."/>
            <person name="Yamazaki M."/>
            <person name="Watanabe K."/>
            <person name="Kumagai A."/>
            <person name="Itakura S."/>
            <person name="Fukuzumi Y."/>
            <person name="Fujimori Y."/>
            <person name="Komiyama M."/>
            <person name="Tashiro H."/>
            <person name="Tanigami A."/>
            <person name="Fujiwara T."/>
            <person name="Ono T."/>
            <person name="Yamada K."/>
            <person name="Fujii Y."/>
            <person name="Ozaki K."/>
            <person name="Hirao M."/>
            <person name="Ohmori Y."/>
            <person name="Kawabata A."/>
            <person name="Hikiji T."/>
            <person name="Kobatake N."/>
            <person name="Inagaki H."/>
            <person name="Ikema Y."/>
            <person name="Okamoto S."/>
            <person name="Okitani R."/>
            <person name="Kawakami T."/>
            <person name="Noguchi S."/>
            <person name="Itoh T."/>
            <person name="Shigeta K."/>
            <person name="Senba T."/>
            <person name="Matsumura K."/>
            <person name="Nakajima Y."/>
            <person name="Mizuno T."/>
            <person name="Morinaga M."/>
            <person name="Sasaki M."/>
            <person name="Togashi T."/>
            <person name="Oyama M."/>
            <person name="Hata H."/>
            <person name="Watanabe M."/>
            <person name="Komatsu T."/>
            <person name="Mizushima-Sugano J."/>
            <person name="Satoh T."/>
            <person name="Shirai Y."/>
            <person name="Takahashi Y."/>
            <person name="Nakagawa K."/>
            <person name="Okumura K."/>
            <person name="Nagase T."/>
            <person name="Nomura N."/>
            <person name="Kikuchi H."/>
            <person name="Masuho Y."/>
            <person name="Yamashita R."/>
            <person name="Nakai K."/>
            <person name="Yada T."/>
            <person name="Nakamura Y."/>
            <person name="Ohara O."/>
            <person name="Isogai T."/>
            <person name="Sugano S."/>
        </authorList>
    </citation>
    <scope>NUCLEOTIDE SEQUENCE [LARGE SCALE MRNA] (ISOFORM 2)</scope>
    <source>
        <tissue>Trachea</tissue>
    </source>
</reference>
<reference key="3">
    <citation type="journal article" date="2003" name="Nature">
        <title>The DNA sequence of human chromosome 7.</title>
        <authorList>
            <person name="Hillier L.W."/>
            <person name="Fulton R.S."/>
            <person name="Fulton L.A."/>
            <person name="Graves T.A."/>
            <person name="Pepin K.H."/>
            <person name="Wagner-McPherson C."/>
            <person name="Layman D."/>
            <person name="Maas J."/>
            <person name="Jaeger S."/>
            <person name="Walker R."/>
            <person name="Wylie K."/>
            <person name="Sekhon M."/>
            <person name="Becker M.C."/>
            <person name="O'Laughlin M.D."/>
            <person name="Schaller M.E."/>
            <person name="Fewell G.A."/>
            <person name="Delehaunty K.D."/>
            <person name="Miner T.L."/>
            <person name="Nash W.E."/>
            <person name="Cordes M."/>
            <person name="Du H."/>
            <person name="Sun H."/>
            <person name="Edwards J."/>
            <person name="Bradshaw-Cordum H."/>
            <person name="Ali J."/>
            <person name="Andrews S."/>
            <person name="Isak A."/>
            <person name="Vanbrunt A."/>
            <person name="Nguyen C."/>
            <person name="Du F."/>
            <person name="Lamar B."/>
            <person name="Courtney L."/>
            <person name="Kalicki J."/>
            <person name="Ozersky P."/>
            <person name="Bielicki L."/>
            <person name="Scott K."/>
            <person name="Holmes A."/>
            <person name="Harkins R."/>
            <person name="Harris A."/>
            <person name="Strong C.M."/>
            <person name="Hou S."/>
            <person name="Tomlinson C."/>
            <person name="Dauphin-Kohlberg S."/>
            <person name="Kozlowicz-Reilly A."/>
            <person name="Leonard S."/>
            <person name="Rohlfing T."/>
            <person name="Rock S.M."/>
            <person name="Tin-Wollam A.-M."/>
            <person name="Abbott A."/>
            <person name="Minx P."/>
            <person name="Maupin R."/>
            <person name="Strowmatt C."/>
            <person name="Latreille P."/>
            <person name="Miller N."/>
            <person name="Johnson D."/>
            <person name="Murray J."/>
            <person name="Woessner J.P."/>
            <person name="Wendl M.C."/>
            <person name="Yang S.-P."/>
            <person name="Schultz B.R."/>
            <person name="Wallis J.W."/>
            <person name="Spieth J."/>
            <person name="Bieri T.A."/>
            <person name="Nelson J.O."/>
            <person name="Berkowicz N."/>
            <person name="Wohldmann P.E."/>
            <person name="Cook L.L."/>
            <person name="Hickenbotham M.T."/>
            <person name="Eldred J."/>
            <person name="Williams D."/>
            <person name="Bedell J.A."/>
            <person name="Mardis E.R."/>
            <person name="Clifton S.W."/>
            <person name="Chissoe S.L."/>
            <person name="Marra M.A."/>
            <person name="Raymond C."/>
            <person name="Haugen E."/>
            <person name="Gillett W."/>
            <person name="Zhou Y."/>
            <person name="James R."/>
            <person name="Phelps K."/>
            <person name="Iadanoto S."/>
            <person name="Bubb K."/>
            <person name="Simms E."/>
            <person name="Levy R."/>
            <person name="Clendenning J."/>
            <person name="Kaul R."/>
            <person name="Kent W.J."/>
            <person name="Furey T.S."/>
            <person name="Baertsch R.A."/>
            <person name="Brent M.R."/>
            <person name="Keibler E."/>
            <person name="Flicek P."/>
            <person name="Bork P."/>
            <person name="Suyama M."/>
            <person name="Bailey J.A."/>
            <person name="Portnoy M.E."/>
            <person name="Torrents D."/>
            <person name="Chinwalla A.T."/>
            <person name="Gish W.R."/>
            <person name="Eddy S.R."/>
            <person name="McPherson J.D."/>
            <person name="Olson M.V."/>
            <person name="Eichler E.E."/>
            <person name="Green E.D."/>
            <person name="Waterston R.H."/>
            <person name="Wilson R.K."/>
        </authorList>
    </citation>
    <scope>NUCLEOTIDE SEQUENCE [LARGE SCALE GENOMIC DNA]</scope>
</reference>
<reference key="4">
    <citation type="journal article" date="2004" name="J. Med. Genet.">
        <title>SEMA3E mutation in a patient with CHARGE syndrome.</title>
        <authorList>
            <person name="Lalani S.R."/>
            <person name="Safiullah A.M."/>
            <person name="Molinari L.M."/>
            <person name="Fernbach S.D."/>
            <person name="Martin D.M."/>
            <person name="Belmont J.W."/>
        </authorList>
    </citation>
    <scope>VARIANTS PRO-208; CYS-619; LEU-703 AND VAL-717</scope>
</reference>
<gene>
    <name type="primary">SEMA3E</name>
    <name type="synonym">KIAA0331</name>
    <name type="synonym">SEMAH</name>
</gene>
<proteinExistence type="evidence at protein level"/>